<comment type="catalytic activity">
    <reaction>
        <text>Hydrolysis of (1-&gt;4)-beta-D-galactosidic linkages in agarose, giving the tetramer as the predominant product.</text>
        <dbReference type="EC" id="3.2.1.81"/>
    </reaction>
</comment>
<comment type="subcellular location">
    <subcellularLocation>
        <location evidence="2">Secreted</location>
    </subcellularLocation>
</comment>
<comment type="similarity">
    <text evidence="2">Belongs to the glycosyl hydrolase 16 family.</text>
</comment>
<proteinExistence type="inferred from homology"/>
<keyword id="KW-1015">Disulfide bond</keyword>
<keyword id="KW-0326">Glycosidase</keyword>
<keyword id="KW-0378">Hydrolase</keyword>
<keyword id="KW-0430">Lectin</keyword>
<keyword id="KW-0964">Secreted</keyword>
<keyword id="KW-0732">Signal</keyword>
<dbReference type="EC" id="3.2.1.81"/>
<dbReference type="EMBL" id="EU200967">
    <property type="protein sequence ID" value="ABW77762.1"/>
    <property type="molecule type" value="Genomic_DNA"/>
</dbReference>
<dbReference type="SMR" id="A8W969"/>
<dbReference type="CAZy" id="CBM13">
    <property type="family name" value="Carbohydrate-Binding Module Family 13"/>
</dbReference>
<dbReference type="CAZy" id="GH16">
    <property type="family name" value="Glycoside Hydrolase Family 16"/>
</dbReference>
<dbReference type="BRENDA" id="3.2.1.81">
    <property type="organism ID" value="9574"/>
</dbReference>
<dbReference type="BRENDA" id="3.2.1.B1">
    <property type="organism ID" value="9574"/>
</dbReference>
<dbReference type="GO" id="GO:0005576">
    <property type="term" value="C:extracellular region"/>
    <property type="evidence" value="ECO:0000250"/>
    <property type="project" value="UniProtKB"/>
</dbReference>
<dbReference type="GO" id="GO:0033916">
    <property type="term" value="F:beta-agarase activity"/>
    <property type="evidence" value="ECO:0000250"/>
    <property type="project" value="UniProtKB"/>
</dbReference>
<dbReference type="GO" id="GO:0030246">
    <property type="term" value="F:carbohydrate binding"/>
    <property type="evidence" value="ECO:0007669"/>
    <property type="project" value="UniProtKB-KW"/>
</dbReference>
<dbReference type="GO" id="GO:0016052">
    <property type="term" value="P:carbohydrate catabolic process"/>
    <property type="evidence" value="ECO:0000250"/>
    <property type="project" value="UniProtKB"/>
</dbReference>
<dbReference type="CDD" id="cd23458">
    <property type="entry name" value="beta-trefoil_Ricin_AgaB34-like"/>
    <property type="match status" value="1"/>
</dbReference>
<dbReference type="CDD" id="cd02178">
    <property type="entry name" value="GH16_beta_agarase"/>
    <property type="match status" value="1"/>
</dbReference>
<dbReference type="Gene3D" id="2.60.120.200">
    <property type="match status" value="1"/>
</dbReference>
<dbReference type="Gene3D" id="2.80.10.50">
    <property type="match status" value="1"/>
</dbReference>
<dbReference type="InterPro" id="IPR016287">
    <property type="entry name" value="Beta_agarase"/>
</dbReference>
<dbReference type="InterPro" id="IPR013320">
    <property type="entry name" value="ConA-like_dom_sf"/>
</dbReference>
<dbReference type="InterPro" id="IPR000757">
    <property type="entry name" value="GH16"/>
</dbReference>
<dbReference type="InterPro" id="IPR035992">
    <property type="entry name" value="Ricin_B-like_lectins"/>
</dbReference>
<dbReference type="InterPro" id="IPR000772">
    <property type="entry name" value="Ricin_B_lectin"/>
</dbReference>
<dbReference type="Pfam" id="PF00652">
    <property type="entry name" value="Ricin_B_lectin"/>
    <property type="match status" value="1"/>
</dbReference>
<dbReference type="SMART" id="SM00458">
    <property type="entry name" value="RICIN"/>
    <property type="match status" value="1"/>
</dbReference>
<dbReference type="SUPFAM" id="SSF49899">
    <property type="entry name" value="Concanavalin A-like lectins/glucanases"/>
    <property type="match status" value="1"/>
</dbReference>
<dbReference type="SUPFAM" id="SSF50370">
    <property type="entry name" value="Ricin B-like lectins"/>
    <property type="match status" value="1"/>
</dbReference>
<dbReference type="PROSITE" id="PS51762">
    <property type="entry name" value="GH16_2"/>
    <property type="match status" value="1"/>
</dbReference>
<dbReference type="PROSITE" id="PS50231">
    <property type="entry name" value="RICIN_B_LECTIN"/>
    <property type="match status" value="1"/>
</dbReference>
<reference evidence="7 8" key="1">
    <citation type="submission" date="2007-10" db="EMBL/GenBank/DDBJ databases">
        <title>Gene cloning, expression, and characterization of a beta-agarase, AgaB34, from Agarivorans albus YKW-34.</title>
        <authorList>
            <person name="Fu X.T."/>
            <person name="Lin H."/>
            <person name="Pan C.-H."/>
            <person name="Kim S.M."/>
        </authorList>
    </citation>
    <scope>NUCLEOTIDE SEQUENCE [GENOMIC DNA]</scope>
    <source>
        <strain evidence="8">YKW-34</strain>
    </source>
</reference>
<accession>A8W969</accession>
<protein>
    <recommendedName>
        <fullName evidence="2 6">Beta-agarase AgaB34</fullName>
        <ecNumber>3.2.1.81</ecNumber>
    </recommendedName>
</protein>
<sequence>MKGFTKHSILMACSIGLAINATAADWDNIPIPAELDAGQSWELQQNYSDSFNYSGKNSTFTGKWKDSYFHSWTGPGLTHWSSDESWVGDGNLIISASRRQGTNKVNAGVITSKTKVKYPIFLEASIKVSNLELSSNFWLLSENDQREIDVLEVYGGARQDWYAKNMSTNFHVFFRNNDNSIKNDYNDQTHFTPTWGNYWRDGFHRFGVYWKSPTDVTFYIDGQKTTKGAWSQVVMKDKDYTGAILDKSRYNMDQEAFIIIDTEDHSWRSEAGHIATDADLADSDKNKMYVDWIRVYKPTGGSTTPPTGDITPPSGYTNLQLAHSNRCVDVINGALWNGSTYQQYSCNTGNNNQRFKFTKIANNQYSINAKVSQLCMELASGSSANGAKVQQWICNHANSNQTWSLEDKGSNTFEIRNKQSGKCLEVANSSNANGGQIRQWACTGATNQRFKFL</sequence>
<gene>
    <name evidence="8" type="primary">agaB34</name>
</gene>
<evidence type="ECO:0000250" key="1">
    <source>
        <dbReference type="UniProtKB" id="P07883"/>
    </source>
</evidence>
<evidence type="ECO:0000250" key="2">
    <source>
        <dbReference type="UniProtKB" id="P85974"/>
    </source>
</evidence>
<evidence type="ECO:0000255" key="3"/>
<evidence type="ECO:0000255" key="4">
    <source>
        <dbReference type="PROSITE-ProRule" id="PRU00174"/>
    </source>
</evidence>
<evidence type="ECO:0000255" key="5">
    <source>
        <dbReference type="PROSITE-ProRule" id="PRU01098"/>
    </source>
</evidence>
<evidence type="ECO:0000303" key="6">
    <source ref="1"/>
</evidence>
<evidence type="ECO:0000305" key="7"/>
<evidence type="ECO:0000312" key="8">
    <source>
        <dbReference type="EMBL" id="ABW77762.1"/>
    </source>
</evidence>
<organism>
    <name type="scientific">Agarivorans albus</name>
    <dbReference type="NCBI Taxonomy" id="182262"/>
    <lineage>
        <taxon>Bacteria</taxon>
        <taxon>Pseudomonadati</taxon>
        <taxon>Pseudomonadota</taxon>
        <taxon>Gammaproteobacteria</taxon>
        <taxon>Alteromonadales</taxon>
        <taxon>Alteromonadaceae</taxon>
        <taxon>Agarivorans</taxon>
    </lineage>
</organism>
<name>AGB34_AGAAL</name>
<feature type="signal peptide" evidence="3 8">
    <location>
        <begin position="1"/>
        <end position="23"/>
    </location>
</feature>
<feature type="chain" id="PRO_0000347324" description="Beta-agarase AgaB34" evidence="8">
    <location>
        <begin position="24"/>
        <end position="453"/>
    </location>
</feature>
<feature type="domain" description="GH16" evidence="5">
    <location>
        <begin position="24"/>
        <end position="301"/>
    </location>
</feature>
<feature type="domain" description="Ricin B-type lectin" evidence="4 8">
    <location>
        <begin position="313"/>
        <end position="453"/>
    </location>
</feature>
<feature type="active site" description="Nucleophile" evidence="1">
    <location>
        <position position="147"/>
    </location>
</feature>
<feature type="active site" description="Proton donor" evidence="1">
    <location>
        <position position="152"/>
    </location>
</feature>
<feature type="disulfide bond" evidence="4 8">
    <location>
        <begin position="327"/>
        <end position="346"/>
    </location>
</feature>
<feature type="disulfide bond" evidence="4 8">
    <location>
        <begin position="375"/>
        <end position="394"/>
    </location>
</feature>
<feature type="disulfide bond" evidence="4 8">
    <location>
        <begin position="423"/>
        <end position="442"/>
    </location>
</feature>